<comment type="catalytic activity">
    <reaction evidence="1">
        <text>tRNA(Phe) + L-phenylalanine + ATP = L-phenylalanyl-tRNA(Phe) + AMP + diphosphate + H(+)</text>
        <dbReference type="Rhea" id="RHEA:19413"/>
        <dbReference type="Rhea" id="RHEA-COMP:9668"/>
        <dbReference type="Rhea" id="RHEA-COMP:9699"/>
        <dbReference type="ChEBI" id="CHEBI:15378"/>
        <dbReference type="ChEBI" id="CHEBI:30616"/>
        <dbReference type="ChEBI" id="CHEBI:33019"/>
        <dbReference type="ChEBI" id="CHEBI:58095"/>
        <dbReference type="ChEBI" id="CHEBI:78442"/>
        <dbReference type="ChEBI" id="CHEBI:78531"/>
        <dbReference type="ChEBI" id="CHEBI:456215"/>
        <dbReference type="EC" id="6.1.1.20"/>
    </reaction>
</comment>
<comment type="cofactor">
    <cofactor evidence="1">
        <name>Mg(2+)</name>
        <dbReference type="ChEBI" id="CHEBI:18420"/>
    </cofactor>
    <text evidence="1">Binds 2 magnesium ions per tetramer.</text>
</comment>
<comment type="subunit">
    <text evidence="1">Tetramer of two alpha and two beta subunits.</text>
</comment>
<comment type="subcellular location">
    <subcellularLocation>
        <location evidence="1">Cytoplasm</location>
    </subcellularLocation>
</comment>
<comment type="similarity">
    <text evidence="1">Belongs to the class-II aminoacyl-tRNA synthetase family. Phe-tRNA synthetase alpha subunit type 1 subfamily.</text>
</comment>
<accession>B1IAA1</accession>
<name>SYFA_STRPI</name>
<sequence>MSTIEEQLKALREETLTSLKQITAGNEKEMQDLRVSVLGKKGSLTEILKGMKDVSAEMRPIIGKHVNEARDVLTAAFEETAKLLEEKKVAAQLASESIDVTLPGRPVATGHRHVLTQTSEEIEDIFIGMGYQVVDGFEVEQDYYNFERMNLPKDHPARDMQDTFYITEEILLRTHTSPVQARAMDAHDFSKGPLKMISPGRVFRRDTDDATHSHQFHQIEGLVVGKNISMADLQGTLQLIVQKMFGEERQIRLRPSYFPFTEPSVEVDVSCFKCGGEGCNVCKKTGWIEIMGAGMVHPRVLEMSGIDATVYSGFAFGLGQERVAMLRYGINDIRGFYQGDVRFSEQFK</sequence>
<organism>
    <name type="scientific">Streptococcus pneumoniae (strain Hungary19A-6)</name>
    <dbReference type="NCBI Taxonomy" id="487214"/>
    <lineage>
        <taxon>Bacteria</taxon>
        <taxon>Bacillati</taxon>
        <taxon>Bacillota</taxon>
        <taxon>Bacilli</taxon>
        <taxon>Lactobacillales</taxon>
        <taxon>Streptococcaceae</taxon>
        <taxon>Streptococcus</taxon>
    </lineage>
</organism>
<gene>
    <name evidence="1" type="primary">pheS</name>
    <name type="ordered locus">SPH_0678</name>
</gene>
<protein>
    <recommendedName>
        <fullName evidence="1">Phenylalanine--tRNA ligase alpha subunit</fullName>
        <ecNumber evidence="1">6.1.1.20</ecNumber>
    </recommendedName>
    <alternativeName>
        <fullName evidence="1">Phenylalanyl-tRNA synthetase alpha subunit</fullName>
        <shortName evidence="1">PheRS</shortName>
    </alternativeName>
</protein>
<proteinExistence type="inferred from homology"/>
<reference key="1">
    <citation type="journal article" date="2010" name="Genome Biol.">
        <title>Structure and dynamics of the pan-genome of Streptococcus pneumoniae and closely related species.</title>
        <authorList>
            <person name="Donati C."/>
            <person name="Hiller N.L."/>
            <person name="Tettelin H."/>
            <person name="Muzzi A."/>
            <person name="Croucher N.J."/>
            <person name="Angiuoli S.V."/>
            <person name="Oggioni M."/>
            <person name="Dunning Hotopp J.C."/>
            <person name="Hu F.Z."/>
            <person name="Riley D.R."/>
            <person name="Covacci A."/>
            <person name="Mitchell T.J."/>
            <person name="Bentley S.D."/>
            <person name="Kilian M."/>
            <person name="Ehrlich G.D."/>
            <person name="Rappuoli R."/>
            <person name="Moxon E.R."/>
            <person name="Masignani V."/>
        </authorList>
    </citation>
    <scope>NUCLEOTIDE SEQUENCE [LARGE SCALE GENOMIC DNA]</scope>
    <source>
        <strain>Hungary19A-6</strain>
    </source>
</reference>
<dbReference type="EC" id="6.1.1.20" evidence="1"/>
<dbReference type="EMBL" id="CP000936">
    <property type="protein sequence ID" value="ACA36057.1"/>
    <property type="molecule type" value="Genomic_DNA"/>
</dbReference>
<dbReference type="RefSeq" id="WP_001813261.1">
    <property type="nucleotide sequence ID" value="NC_010380.1"/>
</dbReference>
<dbReference type="SMR" id="B1IAA1"/>
<dbReference type="GeneID" id="45654008"/>
<dbReference type="KEGG" id="spv:SPH_0678"/>
<dbReference type="HOGENOM" id="CLU_025086_0_1_9"/>
<dbReference type="Proteomes" id="UP000002163">
    <property type="component" value="Chromosome"/>
</dbReference>
<dbReference type="GO" id="GO:0005737">
    <property type="term" value="C:cytoplasm"/>
    <property type="evidence" value="ECO:0007669"/>
    <property type="project" value="UniProtKB-SubCell"/>
</dbReference>
<dbReference type="GO" id="GO:0005524">
    <property type="term" value="F:ATP binding"/>
    <property type="evidence" value="ECO:0007669"/>
    <property type="project" value="UniProtKB-UniRule"/>
</dbReference>
<dbReference type="GO" id="GO:0140096">
    <property type="term" value="F:catalytic activity, acting on a protein"/>
    <property type="evidence" value="ECO:0007669"/>
    <property type="project" value="UniProtKB-ARBA"/>
</dbReference>
<dbReference type="GO" id="GO:0000287">
    <property type="term" value="F:magnesium ion binding"/>
    <property type="evidence" value="ECO:0007669"/>
    <property type="project" value="UniProtKB-UniRule"/>
</dbReference>
<dbReference type="GO" id="GO:0004826">
    <property type="term" value="F:phenylalanine-tRNA ligase activity"/>
    <property type="evidence" value="ECO:0007669"/>
    <property type="project" value="UniProtKB-UniRule"/>
</dbReference>
<dbReference type="GO" id="GO:0016740">
    <property type="term" value="F:transferase activity"/>
    <property type="evidence" value="ECO:0007669"/>
    <property type="project" value="UniProtKB-ARBA"/>
</dbReference>
<dbReference type="GO" id="GO:0000049">
    <property type="term" value="F:tRNA binding"/>
    <property type="evidence" value="ECO:0007669"/>
    <property type="project" value="InterPro"/>
</dbReference>
<dbReference type="GO" id="GO:0006432">
    <property type="term" value="P:phenylalanyl-tRNA aminoacylation"/>
    <property type="evidence" value="ECO:0007669"/>
    <property type="project" value="UniProtKB-UniRule"/>
</dbReference>
<dbReference type="CDD" id="cd00496">
    <property type="entry name" value="PheRS_alpha_core"/>
    <property type="match status" value="1"/>
</dbReference>
<dbReference type="FunFam" id="3.30.930.10:FF:000003">
    <property type="entry name" value="Phenylalanine--tRNA ligase alpha subunit"/>
    <property type="match status" value="1"/>
</dbReference>
<dbReference type="Gene3D" id="3.30.930.10">
    <property type="entry name" value="Bira Bifunctional Protein, Domain 2"/>
    <property type="match status" value="1"/>
</dbReference>
<dbReference type="HAMAP" id="MF_00281">
    <property type="entry name" value="Phe_tRNA_synth_alpha1"/>
    <property type="match status" value="1"/>
</dbReference>
<dbReference type="InterPro" id="IPR006195">
    <property type="entry name" value="aa-tRNA-synth_II"/>
</dbReference>
<dbReference type="InterPro" id="IPR045864">
    <property type="entry name" value="aa-tRNA-synth_II/BPL/LPL"/>
</dbReference>
<dbReference type="InterPro" id="IPR004529">
    <property type="entry name" value="Phe-tRNA-synth_IIc_asu"/>
</dbReference>
<dbReference type="InterPro" id="IPR004188">
    <property type="entry name" value="Phe-tRNA_ligase_II_N"/>
</dbReference>
<dbReference type="InterPro" id="IPR022911">
    <property type="entry name" value="Phe_tRNA_ligase_alpha1_bac"/>
</dbReference>
<dbReference type="InterPro" id="IPR002319">
    <property type="entry name" value="Phenylalanyl-tRNA_Synthase"/>
</dbReference>
<dbReference type="InterPro" id="IPR010978">
    <property type="entry name" value="tRNA-bd_arm"/>
</dbReference>
<dbReference type="NCBIfam" id="TIGR00468">
    <property type="entry name" value="pheS"/>
    <property type="match status" value="1"/>
</dbReference>
<dbReference type="PANTHER" id="PTHR11538:SF41">
    <property type="entry name" value="PHENYLALANINE--TRNA LIGASE, MITOCHONDRIAL"/>
    <property type="match status" value="1"/>
</dbReference>
<dbReference type="PANTHER" id="PTHR11538">
    <property type="entry name" value="PHENYLALANYL-TRNA SYNTHETASE"/>
    <property type="match status" value="1"/>
</dbReference>
<dbReference type="Pfam" id="PF02912">
    <property type="entry name" value="Phe_tRNA-synt_N"/>
    <property type="match status" value="1"/>
</dbReference>
<dbReference type="Pfam" id="PF01409">
    <property type="entry name" value="tRNA-synt_2d"/>
    <property type="match status" value="1"/>
</dbReference>
<dbReference type="SUPFAM" id="SSF55681">
    <property type="entry name" value="Class II aaRS and biotin synthetases"/>
    <property type="match status" value="1"/>
</dbReference>
<dbReference type="SUPFAM" id="SSF46589">
    <property type="entry name" value="tRNA-binding arm"/>
    <property type="match status" value="1"/>
</dbReference>
<dbReference type="PROSITE" id="PS50862">
    <property type="entry name" value="AA_TRNA_LIGASE_II"/>
    <property type="match status" value="1"/>
</dbReference>
<keyword id="KW-0030">Aminoacyl-tRNA synthetase</keyword>
<keyword id="KW-0067">ATP-binding</keyword>
<keyword id="KW-0963">Cytoplasm</keyword>
<keyword id="KW-0436">Ligase</keyword>
<keyword id="KW-0460">Magnesium</keyword>
<keyword id="KW-0479">Metal-binding</keyword>
<keyword id="KW-0547">Nucleotide-binding</keyword>
<keyword id="KW-0648">Protein biosynthesis</keyword>
<evidence type="ECO:0000255" key="1">
    <source>
        <dbReference type="HAMAP-Rule" id="MF_00281"/>
    </source>
</evidence>
<feature type="chain" id="PRO_1000114921" description="Phenylalanine--tRNA ligase alpha subunit">
    <location>
        <begin position="1"/>
        <end position="348"/>
    </location>
</feature>
<feature type="binding site" evidence="1">
    <location>
        <position position="262"/>
    </location>
    <ligand>
        <name>Mg(2+)</name>
        <dbReference type="ChEBI" id="CHEBI:18420"/>
        <note>shared with beta subunit</note>
    </ligand>
</feature>